<feature type="signal peptide" evidence="1">
    <location>
        <begin position="1"/>
        <end position="17"/>
    </location>
</feature>
<feature type="chain" id="PRO_0000294144" description="UPF0450 protein C17orf58 homolog">
    <location>
        <begin position="18"/>
        <end position="379"/>
    </location>
</feature>
<feature type="domain" description="NTR" evidence="2">
    <location>
        <begin position="234"/>
        <end position="378"/>
    </location>
</feature>
<feature type="region of interest" description="Disordered" evidence="3">
    <location>
        <begin position="76"/>
        <end position="95"/>
    </location>
</feature>
<feature type="region of interest" description="Disordered" evidence="3">
    <location>
        <begin position="162"/>
        <end position="194"/>
    </location>
</feature>
<feature type="compositionally biased region" description="Basic and acidic residues" evidence="3">
    <location>
        <begin position="180"/>
        <end position="194"/>
    </location>
</feature>
<feature type="disulfide bond" evidence="2">
    <location>
        <begin position="234"/>
        <end position="308"/>
    </location>
</feature>
<feature type="disulfide bond" evidence="2">
    <location>
        <begin position="238"/>
        <end position="312"/>
    </location>
</feature>
<feature type="disulfide bond" evidence="2">
    <location>
        <begin position="249"/>
        <end position="378"/>
    </location>
</feature>
<dbReference type="EMBL" id="CM004482">
    <property type="protein sequence ID" value="OCT63168.1"/>
    <property type="status" value="ALT_SEQ"/>
    <property type="molecule type" value="Genomic_DNA"/>
</dbReference>
<dbReference type="EMBL" id="BC130208">
    <property type="protein sequence ID" value="AAI30209.1"/>
    <property type="status" value="ALT_INIT"/>
    <property type="molecule type" value="mRNA"/>
</dbReference>
<dbReference type="RefSeq" id="NP_001092147.1">
    <property type="nucleotide sequence ID" value="NM_001098677.1"/>
</dbReference>
<dbReference type="RefSeq" id="XP_018089386.1">
    <property type="nucleotide sequence ID" value="XM_018233897.1"/>
</dbReference>
<dbReference type="PaxDb" id="8355-A0A1L8EUZ6"/>
<dbReference type="GeneID" id="100049720"/>
<dbReference type="KEGG" id="xla:100049720"/>
<dbReference type="AGR" id="Xenbase:XB-GENE-6253947"/>
<dbReference type="CTD" id="100049720"/>
<dbReference type="Xenbase" id="XB-GENE-6253947">
    <property type="gene designation" value="c9_10h17orf58.L"/>
</dbReference>
<dbReference type="OrthoDB" id="9388635at2759"/>
<dbReference type="Proteomes" id="UP000186698">
    <property type="component" value="Chromosome 9_10L"/>
</dbReference>
<dbReference type="Proteomes" id="UP000694892">
    <property type="component" value="Chromosome 9_10L"/>
</dbReference>
<dbReference type="Bgee" id="100049720">
    <property type="expression patterns" value="Expressed in camera-type eye and 7 other cell types or tissues"/>
</dbReference>
<dbReference type="Gene3D" id="2.40.50.120">
    <property type="match status" value="1"/>
</dbReference>
<dbReference type="InterPro" id="IPR001134">
    <property type="entry name" value="Netrin_domain"/>
</dbReference>
<dbReference type="InterPro" id="IPR008993">
    <property type="entry name" value="TIMP-like_OB-fold"/>
</dbReference>
<dbReference type="PANTHER" id="PTHR35967">
    <property type="entry name" value="UPF0450 PROTEIN C17ORF58"/>
    <property type="match status" value="1"/>
</dbReference>
<dbReference type="PANTHER" id="PTHR35967:SF1">
    <property type="entry name" value="UPF0450 PROTEIN C17ORF58"/>
    <property type="match status" value="1"/>
</dbReference>
<dbReference type="SUPFAM" id="SSF50242">
    <property type="entry name" value="TIMP-like"/>
    <property type="match status" value="1"/>
</dbReference>
<dbReference type="PROSITE" id="PS50189">
    <property type="entry name" value="NTR"/>
    <property type="match status" value="1"/>
</dbReference>
<accession>A2BDC9</accession>
<accession>A0A1L8EUZ6</accession>
<protein>
    <recommendedName>
        <fullName>UPF0450 protein C17orf58 homolog</fullName>
    </recommendedName>
</protein>
<organism>
    <name type="scientific">Xenopus laevis</name>
    <name type="common">African clawed frog</name>
    <dbReference type="NCBI Taxonomy" id="8355"/>
    <lineage>
        <taxon>Eukaryota</taxon>
        <taxon>Metazoa</taxon>
        <taxon>Chordata</taxon>
        <taxon>Craniata</taxon>
        <taxon>Vertebrata</taxon>
        <taxon>Euteleostomi</taxon>
        <taxon>Amphibia</taxon>
        <taxon>Batrachia</taxon>
        <taxon>Anura</taxon>
        <taxon>Pipoidea</taxon>
        <taxon>Pipidae</taxon>
        <taxon>Xenopodinae</taxon>
        <taxon>Xenopus</taxon>
        <taxon>Xenopus</taxon>
    </lineage>
</organism>
<reference key="1">
    <citation type="journal article" date="2016" name="Nature">
        <title>Genome evolution in the allotetraploid frog Xenopus laevis.</title>
        <authorList>
            <person name="Session A.M."/>
            <person name="Uno Y."/>
            <person name="Kwon T."/>
            <person name="Chapman J.A."/>
            <person name="Toyoda A."/>
            <person name="Takahashi S."/>
            <person name="Fukui A."/>
            <person name="Hikosaka A."/>
            <person name="Suzuki A."/>
            <person name="Kondo M."/>
            <person name="van Heeringen S.J."/>
            <person name="Quigley I."/>
            <person name="Heinz S."/>
            <person name="Ogino H."/>
            <person name="Ochi H."/>
            <person name="Hellsten U."/>
            <person name="Lyons J.B."/>
            <person name="Simakov O."/>
            <person name="Putnam N."/>
            <person name="Stites J."/>
            <person name="Kuroki Y."/>
            <person name="Tanaka T."/>
            <person name="Michiue T."/>
            <person name="Watanabe M."/>
            <person name="Bogdanovic O."/>
            <person name="Lister R."/>
            <person name="Georgiou G."/>
            <person name="Paranjpe S.S."/>
            <person name="van Kruijsbergen I."/>
            <person name="Shu S."/>
            <person name="Carlson J."/>
            <person name="Kinoshita T."/>
            <person name="Ohta Y."/>
            <person name="Mawaribuchi S."/>
            <person name="Jenkins J."/>
            <person name="Grimwood J."/>
            <person name="Schmutz J."/>
            <person name="Mitros T."/>
            <person name="Mozaffari S.V."/>
            <person name="Suzuki Y."/>
            <person name="Haramoto Y."/>
            <person name="Yamamoto T.S."/>
            <person name="Takagi C."/>
            <person name="Heald R."/>
            <person name="Miller K."/>
            <person name="Haudenschild C."/>
            <person name="Kitzman J."/>
            <person name="Nakayama T."/>
            <person name="Izutsu Y."/>
            <person name="Robert J."/>
            <person name="Fortriede J."/>
            <person name="Burns K."/>
            <person name="Lotay V."/>
            <person name="Karimi K."/>
            <person name="Yasuoka Y."/>
            <person name="Dichmann D.S."/>
            <person name="Flajnik M.F."/>
            <person name="Houston D.W."/>
            <person name="Shendure J."/>
            <person name="DuPasquier L."/>
            <person name="Vize P.D."/>
            <person name="Zorn A.M."/>
            <person name="Ito M."/>
            <person name="Marcotte E.M."/>
            <person name="Wallingford J.B."/>
            <person name="Ito Y."/>
            <person name="Asashima M."/>
            <person name="Ueno N."/>
            <person name="Matsuda Y."/>
            <person name="Veenstra G.J."/>
            <person name="Fujiyama A."/>
            <person name="Harland R.M."/>
            <person name="Taira M."/>
            <person name="Rokhsar D.S."/>
        </authorList>
    </citation>
    <scope>NUCLEOTIDE SEQUENCE [LARGE SCALE GENOMIC DNA]</scope>
    <source>
        <strain>J</strain>
    </source>
</reference>
<reference key="2">
    <citation type="submission" date="2006-12" db="EMBL/GenBank/DDBJ databases">
        <authorList>
            <consortium name="NIH - Xenopus Gene Collection (XGC) project"/>
        </authorList>
    </citation>
    <scope>NUCLEOTIDE SEQUENCE [LARGE SCALE MRNA] OF 270-379</scope>
    <source>
        <tissue>Brain</tissue>
    </source>
</reference>
<keyword id="KW-1015">Disulfide bond</keyword>
<keyword id="KW-1185">Reference proteome</keyword>
<keyword id="KW-0732">Signal</keyword>
<proteinExistence type="evidence at transcript level"/>
<name>CQ058_XENLA</name>
<comment type="similarity">
    <text evidence="4">Belongs to the UPF0450 family.</text>
</comment>
<comment type="sequence caution" evidence="4">
    <conflict type="erroneous initiation">
        <sequence resource="EMBL-CDS" id="AAI30209"/>
    </conflict>
    <text>Truncated N-terminus.</text>
</comment>
<comment type="sequence caution" evidence="4">
    <conflict type="erroneous gene model prediction">
        <sequence resource="EMBL-CDS" id="OCT63168"/>
    </conflict>
</comment>
<sequence>MIPALTVPLLFLCATSASPAAGRGVLVPPDPKSKLIPSTTKGTHAIAKPTPSQAALRHLMVPADNFGLEMLTDHQRTRATHPQRQGQDLALPDKTRAKTKVTLDNNTGPRKVNSLSNREALAGAQPEGRNFIPSFFGNSKVHQDRSQLSSYFQLHTKSSSLTASQNLQGRKYSRNNDYGSMDHESNRPGKMNPHREEEVVSNSTKPAWVINRQPSSVLFQRPAFRKGFDNKEMCIAECHRDKDEREAYCNSDFAVNGIVQDMESVGKESRLLTLLVSSDGLYKMNRLYISPDGFFFKVKILVTDTLNCHKPCLDFKPGVRYIIMGQIYHKRIIFPQAMQHLLGGRLRAGDGFIKSSSYVQRFNRKRGRKVLAAAHSKCR</sequence>
<evidence type="ECO:0000255" key="1"/>
<evidence type="ECO:0000255" key="2">
    <source>
        <dbReference type="PROSITE-ProRule" id="PRU00295"/>
    </source>
</evidence>
<evidence type="ECO:0000256" key="3">
    <source>
        <dbReference type="SAM" id="MobiDB-lite"/>
    </source>
</evidence>
<evidence type="ECO:0000305" key="4"/>